<protein>
    <recommendedName>
        <fullName evidence="1">tRNA pseudouridine synthase A</fullName>
        <ecNumber evidence="1">5.4.99.12</ecNumber>
    </recommendedName>
    <alternativeName>
        <fullName evidence="1">tRNA pseudouridine(38-40) synthase</fullName>
    </alternativeName>
    <alternativeName>
        <fullName evidence="1">tRNA pseudouridylate synthase I</fullName>
    </alternativeName>
    <alternativeName>
        <fullName evidence="1">tRNA-uridine isomerase I</fullName>
    </alternativeName>
</protein>
<proteinExistence type="inferred from homology"/>
<accession>Q1RKH3</accession>
<dbReference type="EC" id="5.4.99.12" evidence="1"/>
<dbReference type="EMBL" id="CP000087">
    <property type="protein sequence ID" value="ABE04141.1"/>
    <property type="molecule type" value="Genomic_DNA"/>
</dbReference>
<dbReference type="RefSeq" id="WP_011476756.1">
    <property type="nucleotide sequence ID" value="NC_007940.1"/>
</dbReference>
<dbReference type="SMR" id="Q1RKH3"/>
<dbReference type="KEGG" id="rbe:RBE_0060"/>
<dbReference type="eggNOG" id="COG0101">
    <property type="taxonomic scope" value="Bacteria"/>
</dbReference>
<dbReference type="HOGENOM" id="CLU_014673_0_2_5"/>
<dbReference type="OrthoDB" id="9811823at2"/>
<dbReference type="Proteomes" id="UP000001951">
    <property type="component" value="Chromosome"/>
</dbReference>
<dbReference type="GO" id="GO:0003723">
    <property type="term" value="F:RNA binding"/>
    <property type="evidence" value="ECO:0007669"/>
    <property type="project" value="InterPro"/>
</dbReference>
<dbReference type="GO" id="GO:0160147">
    <property type="term" value="F:tRNA pseudouridine(38-40) synthase activity"/>
    <property type="evidence" value="ECO:0007669"/>
    <property type="project" value="UniProtKB-EC"/>
</dbReference>
<dbReference type="GO" id="GO:0031119">
    <property type="term" value="P:tRNA pseudouridine synthesis"/>
    <property type="evidence" value="ECO:0007669"/>
    <property type="project" value="UniProtKB-UniRule"/>
</dbReference>
<dbReference type="CDD" id="cd02570">
    <property type="entry name" value="PseudoU_synth_EcTruA"/>
    <property type="match status" value="1"/>
</dbReference>
<dbReference type="FunFam" id="3.30.70.580:FF:000001">
    <property type="entry name" value="tRNA pseudouridine synthase A"/>
    <property type="match status" value="1"/>
</dbReference>
<dbReference type="Gene3D" id="3.30.70.660">
    <property type="entry name" value="Pseudouridine synthase I, catalytic domain, C-terminal subdomain"/>
    <property type="match status" value="1"/>
</dbReference>
<dbReference type="Gene3D" id="3.30.70.580">
    <property type="entry name" value="Pseudouridine synthase I, catalytic domain, N-terminal subdomain"/>
    <property type="match status" value="1"/>
</dbReference>
<dbReference type="HAMAP" id="MF_00171">
    <property type="entry name" value="TruA"/>
    <property type="match status" value="1"/>
</dbReference>
<dbReference type="InterPro" id="IPR020103">
    <property type="entry name" value="PsdUridine_synth_cat_dom_sf"/>
</dbReference>
<dbReference type="InterPro" id="IPR001406">
    <property type="entry name" value="PsdUridine_synth_TruA"/>
</dbReference>
<dbReference type="InterPro" id="IPR020097">
    <property type="entry name" value="PsdUridine_synth_TruA_a/b_dom"/>
</dbReference>
<dbReference type="InterPro" id="IPR020095">
    <property type="entry name" value="PsdUridine_synth_TruA_C"/>
</dbReference>
<dbReference type="InterPro" id="IPR020094">
    <property type="entry name" value="TruA/RsuA/RluB/E/F_N"/>
</dbReference>
<dbReference type="NCBIfam" id="TIGR00071">
    <property type="entry name" value="hisT_truA"/>
    <property type="match status" value="1"/>
</dbReference>
<dbReference type="PANTHER" id="PTHR11142">
    <property type="entry name" value="PSEUDOURIDYLATE SYNTHASE"/>
    <property type="match status" value="1"/>
</dbReference>
<dbReference type="PANTHER" id="PTHR11142:SF0">
    <property type="entry name" value="TRNA PSEUDOURIDINE SYNTHASE-LIKE 1"/>
    <property type="match status" value="1"/>
</dbReference>
<dbReference type="Pfam" id="PF01416">
    <property type="entry name" value="PseudoU_synth_1"/>
    <property type="match status" value="2"/>
</dbReference>
<dbReference type="PIRSF" id="PIRSF001430">
    <property type="entry name" value="tRNA_psdUrid_synth"/>
    <property type="match status" value="1"/>
</dbReference>
<dbReference type="SUPFAM" id="SSF55120">
    <property type="entry name" value="Pseudouridine synthase"/>
    <property type="match status" value="1"/>
</dbReference>
<sequence length="245" mass="27982">MYRYKISVEYLGTNLAGWQRQSGVMSVQQILEEAIYKFSGEQVTLFGSGRTDAGVHAIGQIAHFDLSKYFEPYKIIRAINYFTRPYIVGVCNCELVDNNFHARFSAIARHYVYRILNRPYPSVIDFDRVWWISVPLDVSAMQKSSLYLLGKHNFTSFRASSCQSKSPIKTLTKLDIIKENEEIKLYFSAPSFLHHMVRNIVGSLVLVGKNIWQAEQMQQVLEVADRKAAGPTAPACGLYFIKADY</sequence>
<name>TRUA_RICBR</name>
<comment type="function">
    <text evidence="1">Formation of pseudouridine at positions 38, 39 and 40 in the anticodon stem and loop of transfer RNAs.</text>
</comment>
<comment type="catalytic activity">
    <reaction evidence="1">
        <text>uridine(38/39/40) in tRNA = pseudouridine(38/39/40) in tRNA</text>
        <dbReference type="Rhea" id="RHEA:22376"/>
        <dbReference type="Rhea" id="RHEA-COMP:10085"/>
        <dbReference type="Rhea" id="RHEA-COMP:10087"/>
        <dbReference type="ChEBI" id="CHEBI:65314"/>
        <dbReference type="ChEBI" id="CHEBI:65315"/>
        <dbReference type="EC" id="5.4.99.12"/>
    </reaction>
</comment>
<comment type="subunit">
    <text evidence="1">Homodimer.</text>
</comment>
<comment type="similarity">
    <text evidence="1">Belongs to the tRNA pseudouridine synthase TruA family.</text>
</comment>
<evidence type="ECO:0000255" key="1">
    <source>
        <dbReference type="HAMAP-Rule" id="MF_00171"/>
    </source>
</evidence>
<keyword id="KW-0413">Isomerase</keyword>
<keyword id="KW-0819">tRNA processing</keyword>
<gene>
    <name evidence="1" type="primary">truA</name>
    <name type="ordered locus">RBE_0060</name>
</gene>
<reference key="1">
    <citation type="journal article" date="2006" name="PLoS Genet.">
        <title>Genome sequence of Rickettsia bellii illuminates the role of amoebae in gene exchanges between intracellular pathogens.</title>
        <authorList>
            <person name="Ogata H."/>
            <person name="La Scola B."/>
            <person name="Audic S."/>
            <person name="Renesto P."/>
            <person name="Blanc G."/>
            <person name="Robert C."/>
            <person name="Fournier P.-E."/>
            <person name="Claverie J.-M."/>
            <person name="Raoult D."/>
        </authorList>
    </citation>
    <scope>NUCLEOTIDE SEQUENCE [LARGE SCALE GENOMIC DNA]</scope>
    <source>
        <strain>RML369-C</strain>
    </source>
</reference>
<feature type="chain" id="PRO_0000278055" description="tRNA pseudouridine synthase A">
    <location>
        <begin position="1"/>
        <end position="245"/>
    </location>
</feature>
<feature type="active site" description="Nucleophile" evidence="1">
    <location>
        <position position="52"/>
    </location>
</feature>
<feature type="binding site" evidence="1">
    <location>
        <position position="111"/>
    </location>
    <ligand>
        <name>substrate</name>
    </ligand>
</feature>
<organism>
    <name type="scientific">Rickettsia bellii (strain RML369-C)</name>
    <dbReference type="NCBI Taxonomy" id="336407"/>
    <lineage>
        <taxon>Bacteria</taxon>
        <taxon>Pseudomonadati</taxon>
        <taxon>Pseudomonadota</taxon>
        <taxon>Alphaproteobacteria</taxon>
        <taxon>Rickettsiales</taxon>
        <taxon>Rickettsiaceae</taxon>
        <taxon>Rickettsieae</taxon>
        <taxon>Rickettsia</taxon>
        <taxon>belli group</taxon>
    </lineage>
</organism>